<feature type="chain" id="PRO_0000254383" description="ATP synthase subunit beta">
    <location>
        <begin position="1"/>
        <end position="470"/>
    </location>
</feature>
<feature type="binding site" evidence="1">
    <location>
        <begin position="155"/>
        <end position="162"/>
    </location>
    <ligand>
        <name>ATP</name>
        <dbReference type="ChEBI" id="CHEBI:30616"/>
    </ligand>
</feature>
<gene>
    <name evidence="1" type="primary">atpD</name>
    <name type="ordered locus">SAUSA300_2058</name>
</gene>
<reference key="1">
    <citation type="journal article" date="2006" name="Lancet">
        <title>Complete genome sequence of USA300, an epidemic clone of community-acquired meticillin-resistant Staphylococcus aureus.</title>
        <authorList>
            <person name="Diep B.A."/>
            <person name="Gill S.R."/>
            <person name="Chang R.F."/>
            <person name="Phan T.H."/>
            <person name="Chen J.H."/>
            <person name="Davidson M.G."/>
            <person name="Lin F."/>
            <person name="Lin J."/>
            <person name="Carleton H.A."/>
            <person name="Mongodin E.F."/>
            <person name="Sensabaugh G.F."/>
            <person name="Perdreau-Remington F."/>
        </authorList>
    </citation>
    <scope>NUCLEOTIDE SEQUENCE [LARGE SCALE GENOMIC DNA]</scope>
    <source>
        <strain>USA300</strain>
    </source>
</reference>
<accession>Q2FF24</accession>
<keyword id="KW-0066">ATP synthesis</keyword>
<keyword id="KW-0067">ATP-binding</keyword>
<keyword id="KW-1003">Cell membrane</keyword>
<keyword id="KW-0139">CF(1)</keyword>
<keyword id="KW-0375">Hydrogen ion transport</keyword>
<keyword id="KW-0406">Ion transport</keyword>
<keyword id="KW-0472">Membrane</keyword>
<keyword id="KW-0547">Nucleotide-binding</keyword>
<keyword id="KW-1278">Translocase</keyword>
<keyword id="KW-0813">Transport</keyword>
<organism>
    <name type="scientific">Staphylococcus aureus (strain USA300)</name>
    <dbReference type="NCBI Taxonomy" id="367830"/>
    <lineage>
        <taxon>Bacteria</taxon>
        <taxon>Bacillati</taxon>
        <taxon>Bacillota</taxon>
        <taxon>Bacilli</taxon>
        <taxon>Bacillales</taxon>
        <taxon>Staphylococcaceae</taxon>
        <taxon>Staphylococcus</taxon>
    </lineage>
</organism>
<comment type="function">
    <text evidence="1">Produces ATP from ADP in the presence of a proton gradient across the membrane. The catalytic sites are hosted primarily by the beta subunits.</text>
</comment>
<comment type="catalytic activity">
    <reaction evidence="1">
        <text>ATP + H2O + 4 H(+)(in) = ADP + phosphate + 5 H(+)(out)</text>
        <dbReference type="Rhea" id="RHEA:57720"/>
        <dbReference type="ChEBI" id="CHEBI:15377"/>
        <dbReference type="ChEBI" id="CHEBI:15378"/>
        <dbReference type="ChEBI" id="CHEBI:30616"/>
        <dbReference type="ChEBI" id="CHEBI:43474"/>
        <dbReference type="ChEBI" id="CHEBI:456216"/>
        <dbReference type="EC" id="7.1.2.2"/>
    </reaction>
</comment>
<comment type="subunit">
    <text evidence="1">F-type ATPases have 2 components, CF(1) - the catalytic core - and CF(0) - the membrane proton channel. CF(1) has five subunits: alpha(3), beta(3), gamma(1), delta(1), epsilon(1). CF(0) has three main subunits: a(1), b(2) and c(9-12). The alpha and beta chains form an alternating ring which encloses part of the gamma chain. CF(1) is attached to CF(0) by a central stalk formed by the gamma and epsilon chains, while a peripheral stalk is formed by the delta and b chains.</text>
</comment>
<comment type="subcellular location">
    <subcellularLocation>
        <location evidence="1">Cell membrane</location>
        <topology evidence="1">Peripheral membrane protein</topology>
    </subcellularLocation>
</comment>
<comment type="similarity">
    <text evidence="1">Belongs to the ATPase alpha/beta chains family.</text>
</comment>
<name>ATPB_STAA3</name>
<sequence length="470" mass="51400">MGIGRVTQVMGPVIDVRFEHNEVPKINNALVIDVPKEEGTIQLTLEVALQLGDDVVRTIAMDSTDGVQRGMDVKDTGKEISVPVGDETLGRVFNVLGETIDLKEEISDSVRRDPIHRQAPAFDELSTEVQILETGIKVVDLLAPYIKGGKIGLFGGAGVGKTVLIQELINNIAQEHGGISVFAGVGERTREGNDLYFEMSDSGVIKKTAMVFGQMNEPPGARMRVALSGLTMAEYFRDEQGQDVLLFIDNIFRFTQAGSEVSALLGRMPSAVGYQPTLATEMGQLQERITSTTKGSVTSIQAVFVPADDYTDPAPATAFAHLDATTNLERKLTEMGIYPAVDPLASTSRALEPSIVGQEHYEVARDVQSTLQKYRELQDIIAILGMDELSDEDKQTVERARRIQFFLSQNFHVAEQFTGQKGSYVPVKTTVANFKDILDGKYDHIPEDAFRLVGSMDDVIAKAKDMGVEV</sequence>
<protein>
    <recommendedName>
        <fullName evidence="1">ATP synthase subunit beta</fullName>
        <ecNumber evidence="1">7.1.2.2</ecNumber>
    </recommendedName>
    <alternativeName>
        <fullName evidence="1">ATP synthase F1 sector subunit beta</fullName>
    </alternativeName>
    <alternativeName>
        <fullName evidence="1">F-ATPase subunit beta</fullName>
    </alternativeName>
</protein>
<dbReference type="EC" id="7.1.2.2" evidence="1"/>
<dbReference type="EMBL" id="CP000255">
    <property type="protein sequence ID" value="ABD21368.1"/>
    <property type="molecule type" value="Genomic_DNA"/>
</dbReference>
<dbReference type="RefSeq" id="WP_000511135.1">
    <property type="nucleotide sequence ID" value="NZ_CP027476.1"/>
</dbReference>
<dbReference type="SMR" id="Q2FF24"/>
<dbReference type="GeneID" id="98346410"/>
<dbReference type="KEGG" id="saa:SAUSA300_2058"/>
<dbReference type="HOGENOM" id="CLU_022398_0_2_9"/>
<dbReference type="OMA" id="SMEEGGW"/>
<dbReference type="Proteomes" id="UP000001939">
    <property type="component" value="Chromosome"/>
</dbReference>
<dbReference type="GO" id="GO:0005886">
    <property type="term" value="C:plasma membrane"/>
    <property type="evidence" value="ECO:0007669"/>
    <property type="project" value="UniProtKB-SubCell"/>
</dbReference>
<dbReference type="GO" id="GO:0045259">
    <property type="term" value="C:proton-transporting ATP synthase complex"/>
    <property type="evidence" value="ECO:0007669"/>
    <property type="project" value="UniProtKB-KW"/>
</dbReference>
<dbReference type="GO" id="GO:0005524">
    <property type="term" value="F:ATP binding"/>
    <property type="evidence" value="ECO:0007669"/>
    <property type="project" value="UniProtKB-UniRule"/>
</dbReference>
<dbReference type="GO" id="GO:0016887">
    <property type="term" value="F:ATP hydrolysis activity"/>
    <property type="evidence" value="ECO:0007669"/>
    <property type="project" value="InterPro"/>
</dbReference>
<dbReference type="GO" id="GO:0046933">
    <property type="term" value="F:proton-transporting ATP synthase activity, rotational mechanism"/>
    <property type="evidence" value="ECO:0007669"/>
    <property type="project" value="UniProtKB-UniRule"/>
</dbReference>
<dbReference type="CDD" id="cd18110">
    <property type="entry name" value="ATP-synt_F1_beta_C"/>
    <property type="match status" value="1"/>
</dbReference>
<dbReference type="CDD" id="cd18115">
    <property type="entry name" value="ATP-synt_F1_beta_N"/>
    <property type="match status" value="1"/>
</dbReference>
<dbReference type="CDD" id="cd01133">
    <property type="entry name" value="F1-ATPase_beta_CD"/>
    <property type="match status" value="1"/>
</dbReference>
<dbReference type="FunFam" id="1.10.1140.10:FF:000001">
    <property type="entry name" value="ATP synthase subunit beta"/>
    <property type="match status" value="1"/>
</dbReference>
<dbReference type="FunFam" id="2.40.10.170:FF:000005">
    <property type="entry name" value="ATP synthase subunit beta"/>
    <property type="match status" value="1"/>
</dbReference>
<dbReference type="FunFam" id="3.40.50.300:FF:000004">
    <property type="entry name" value="ATP synthase subunit beta"/>
    <property type="match status" value="1"/>
</dbReference>
<dbReference type="Gene3D" id="2.40.10.170">
    <property type="match status" value="1"/>
</dbReference>
<dbReference type="Gene3D" id="1.10.1140.10">
    <property type="entry name" value="Bovine Mitochondrial F1-atpase, Atp Synthase Beta Chain, Chain D, domain 3"/>
    <property type="match status" value="1"/>
</dbReference>
<dbReference type="Gene3D" id="3.40.50.300">
    <property type="entry name" value="P-loop containing nucleotide triphosphate hydrolases"/>
    <property type="match status" value="1"/>
</dbReference>
<dbReference type="HAMAP" id="MF_01347">
    <property type="entry name" value="ATP_synth_beta_bact"/>
    <property type="match status" value="1"/>
</dbReference>
<dbReference type="InterPro" id="IPR003593">
    <property type="entry name" value="AAA+_ATPase"/>
</dbReference>
<dbReference type="InterPro" id="IPR055190">
    <property type="entry name" value="ATP-synt_VA_C"/>
</dbReference>
<dbReference type="InterPro" id="IPR005722">
    <property type="entry name" value="ATP_synth_F1_bsu"/>
</dbReference>
<dbReference type="InterPro" id="IPR020003">
    <property type="entry name" value="ATPase_a/bsu_AS"/>
</dbReference>
<dbReference type="InterPro" id="IPR050053">
    <property type="entry name" value="ATPase_alpha/beta_chains"/>
</dbReference>
<dbReference type="InterPro" id="IPR004100">
    <property type="entry name" value="ATPase_F1/V1/A1_a/bsu_N"/>
</dbReference>
<dbReference type="InterPro" id="IPR036121">
    <property type="entry name" value="ATPase_F1/V1/A1_a/bsu_N_sf"/>
</dbReference>
<dbReference type="InterPro" id="IPR000194">
    <property type="entry name" value="ATPase_F1/V1/A1_a/bsu_nucl-bd"/>
</dbReference>
<dbReference type="InterPro" id="IPR024034">
    <property type="entry name" value="ATPase_F1/V1_b/a_C"/>
</dbReference>
<dbReference type="InterPro" id="IPR027417">
    <property type="entry name" value="P-loop_NTPase"/>
</dbReference>
<dbReference type="NCBIfam" id="TIGR01039">
    <property type="entry name" value="atpD"/>
    <property type="match status" value="1"/>
</dbReference>
<dbReference type="PANTHER" id="PTHR15184">
    <property type="entry name" value="ATP SYNTHASE"/>
    <property type="match status" value="1"/>
</dbReference>
<dbReference type="PANTHER" id="PTHR15184:SF71">
    <property type="entry name" value="ATP SYNTHASE SUBUNIT BETA, MITOCHONDRIAL"/>
    <property type="match status" value="1"/>
</dbReference>
<dbReference type="Pfam" id="PF00006">
    <property type="entry name" value="ATP-synt_ab"/>
    <property type="match status" value="1"/>
</dbReference>
<dbReference type="Pfam" id="PF02874">
    <property type="entry name" value="ATP-synt_ab_N"/>
    <property type="match status" value="1"/>
</dbReference>
<dbReference type="Pfam" id="PF22919">
    <property type="entry name" value="ATP-synt_VA_C"/>
    <property type="match status" value="1"/>
</dbReference>
<dbReference type="SMART" id="SM00382">
    <property type="entry name" value="AAA"/>
    <property type="match status" value="1"/>
</dbReference>
<dbReference type="SUPFAM" id="SSF47917">
    <property type="entry name" value="C-terminal domain of alpha and beta subunits of F1 ATP synthase"/>
    <property type="match status" value="1"/>
</dbReference>
<dbReference type="SUPFAM" id="SSF50615">
    <property type="entry name" value="N-terminal domain of alpha and beta subunits of F1 ATP synthase"/>
    <property type="match status" value="1"/>
</dbReference>
<dbReference type="SUPFAM" id="SSF52540">
    <property type="entry name" value="P-loop containing nucleoside triphosphate hydrolases"/>
    <property type="match status" value="1"/>
</dbReference>
<dbReference type="PROSITE" id="PS00152">
    <property type="entry name" value="ATPASE_ALPHA_BETA"/>
    <property type="match status" value="1"/>
</dbReference>
<proteinExistence type="inferred from homology"/>
<evidence type="ECO:0000255" key="1">
    <source>
        <dbReference type="HAMAP-Rule" id="MF_01347"/>
    </source>
</evidence>